<protein>
    <recommendedName>
        <fullName evidence="1">Transcriptional repressor NrdR</fullName>
    </recommendedName>
</protein>
<reference key="1">
    <citation type="journal article" date="2002" name="Nature">
        <title>Comparison of the genomes of two Xanthomonas pathogens with differing host specificities.</title>
        <authorList>
            <person name="da Silva A.C.R."/>
            <person name="Ferro J.A."/>
            <person name="Reinach F.C."/>
            <person name="Farah C.S."/>
            <person name="Furlan L.R."/>
            <person name="Quaggio R.B."/>
            <person name="Monteiro-Vitorello C.B."/>
            <person name="Van Sluys M.A."/>
            <person name="Almeida N.F. Jr."/>
            <person name="Alves L.M.C."/>
            <person name="do Amaral A.M."/>
            <person name="Bertolini M.C."/>
            <person name="Camargo L.E.A."/>
            <person name="Camarotte G."/>
            <person name="Cannavan F."/>
            <person name="Cardozo J."/>
            <person name="Chambergo F."/>
            <person name="Ciapina L.P."/>
            <person name="Cicarelli R.M.B."/>
            <person name="Coutinho L.L."/>
            <person name="Cursino-Santos J.R."/>
            <person name="El-Dorry H."/>
            <person name="Faria J.B."/>
            <person name="Ferreira A.J.S."/>
            <person name="Ferreira R.C.C."/>
            <person name="Ferro M.I.T."/>
            <person name="Formighieri E.F."/>
            <person name="Franco M.C."/>
            <person name="Greggio C.C."/>
            <person name="Gruber A."/>
            <person name="Katsuyama A.M."/>
            <person name="Kishi L.T."/>
            <person name="Leite R.P."/>
            <person name="Lemos E.G.M."/>
            <person name="Lemos M.V.F."/>
            <person name="Locali E.C."/>
            <person name="Machado M.A."/>
            <person name="Madeira A.M.B.N."/>
            <person name="Martinez-Rossi N.M."/>
            <person name="Martins E.C."/>
            <person name="Meidanis J."/>
            <person name="Menck C.F.M."/>
            <person name="Miyaki C.Y."/>
            <person name="Moon D.H."/>
            <person name="Moreira L.M."/>
            <person name="Novo M.T.M."/>
            <person name="Okura V.K."/>
            <person name="Oliveira M.C."/>
            <person name="Oliveira V.R."/>
            <person name="Pereira H.A."/>
            <person name="Rossi A."/>
            <person name="Sena J.A.D."/>
            <person name="Silva C."/>
            <person name="de Souza R.F."/>
            <person name="Spinola L.A.F."/>
            <person name="Takita M.A."/>
            <person name="Tamura R.E."/>
            <person name="Teixeira E.C."/>
            <person name="Tezza R.I.D."/>
            <person name="Trindade dos Santos M."/>
            <person name="Truffi D."/>
            <person name="Tsai S.M."/>
            <person name="White F.F."/>
            <person name="Setubal J.C."/>
            <person name="Kitajima J.P."/>
        </authorList>
    </citation>
    <scope>NUCLEOTIDE SEQUENCE [LARGE SCALE GENOMIC DNA]</scope>
    <source>
        <strain>306</strain>
    </source>
</reference>
<sequence>MHCPFCQHNDTRVIDSRVSEDGTTIRRRRECEACGERFSTLETIELKLPTVVKSDGGREAFDARKLRTSFDRALQKRPVAEEQIEAAVRAVVHQLRMSGEREVGSLRVGEYVMVELRKLDHVGYVRFASVYRSFQDVADFREEIEKLERELPVGSEQLPLLEAALERAGKPGKR</sequence>
<comment type="function">
    <text evidence="1">Negatively regulates transcription of bacterial ribonucleotide reductase nrd genes and operons by binding to NrdR-boxes.</text>
</comment>
<comment type="cofactor">
    <cofactor evidence="1">
        <name>Zn(2+)</name>
        <dbReference type="ChEBI" id="CHEBI:29105"/>
    </cofactor>
    <text evidence="1">Binds 1 zinc ion.</text>
</comment>
<comment type="similarity">
    <text evidence="1">Belongs to the NrdR family.</text>
</comment>
<evidence type="ECO:0000255" key="1">
    <source>
        <dbReference type="HAMAP-Rule" id="MF_00440"/>
    </source>
</evidence>
<organism>
    <name type="scientific">Xanthomonas axonopodis pv. citri (strain 306)</name>
    <dbReference type="NCBI Taxonomy" id="190486"/>
    <lineage>
        <taxon>Bacteria</taxon>
        <taxon>Pseudomonadati</taxon>
        <taxon>Pseudomonadota</taxon>
        <taxon>Gammaproteobacteria</taxon>
        <taxon>Lysobacterales</taxon>
        <taxon>Lysobacteraceae</taxon>
        <taxon>Xanthomonas</taxon>
    </lineage>
</organism>
<keyword id="KW-0067">ATP-binding</keyword>
<keyword id="KW-0238">DNA-binding</keyword>
<keyword id="KW-0479">Metal-binding</keyword>
<keyword id="KW-0547">Nucleotide-binding</keyword>
<keyword id="KW-0678">Repressor</keyword>
<keyword id="KW-0804">Transcription</keyword>
<keyword id="KW-0805">Transcription regulation</keyword>
<keyword id="KW-0862">Zinc</keyword>
<keyword id="KW-0863">Zinc-finger</keyword>
<proteinExistence type="inferred from homology"/>
<name>NRDR_XANAC</name>
<feature type="chain" id="PRO_0000182381" description="Transcriptional repressor NrdR">
    <location>
        <begin position="1"/>
        <end position="174"/>
    </location>
</feature>
<feature type="domain" description="ATP-cone" evidence="1">
    <location>
        <begin position="49"/>
        <end position="139"/>
    </location>
</feature>
<feature type="zinc finger region" evidence="1">
    <location>
        <begin position="3"/>
        <end position="34"/>
    </location>
</feature>
<dbReference type="EMBL" id="AE008923">
    <property type="protein sequence ID" value="AAM35633.1"/>
    <property type="molecule type" value="Genomic_DNA"/>
</dbReference>
<dbReference type="RefSeq" id="WP_003490311.1">
    <property type="nucleotide sequence ID" value="NC_003919.1"/>
</dbReference>
<dbReference type="SMR" id="Q8PPE2"/>
<dbReference type="GeneID" id="97509129"/>
<dbReference type="KEGG" id="xac:XAC0744"/>
<dbReference type="eggNOG" id="COG1327">
    <property type="taxonomic scope" value="Bacteria"/>
</dbReference>
<dbReference type="HOGENOM" id="CLU_108412_0_0_6"/>
<dbReference type="Proteomes" id="UP000000576">
    <property type="component" value="Chromosome"/>
</dbReference>
<dbReference type="GO" id="GO:0005524">
    <property type="term" value="F:ATP binding"/>
    <property type="evidence" value="ECO:0007669"/>
    <property type="project" value="UniProtKB-KW"/>
</dbReference>
<dbReference type="GO" id="GO:0003677">
    <property type="term" value="F:DNA binding"/>
    <property type="evidence" value="ECO:0007669"/>
    <property type="project" value="UniProtKB-KW"/>
</dbReference>
<dbReference type="GO" id="GO:0008270">
    <property type="term" value="F:zinc ion binding"/>
    <property type="evidence" value="ECO:0007669"/>
    <property type="project" value="UniProtKB-UniRule"/>
</dbReference>
<dbReference type="GO" id="GO:0045892">
    <property type="term" value="P:negative regulation of DNA-templated transcription"/>
    <property type="evidence" value="ECO:0007669"/>
    <property type="project" value="UniProtKB-UniRule"/>
</dbReference>
<dbReference type="HAMAP" id="MF_00440">
    <property type="entry name" value="NrdR"/>
    <property type="match status" value="1"/>
</dbReference>
<dbReference type="InterPro" id="IPR005144">
    <property type="entry name" value="ATP-cone_dom"/>
</dbReference>
<dbReference type="InterPro" id="IPR055173">
    <property type="entry name" value="NrdR-like_N"/>
</dbReference>
<dbReference type="InterPro" id="IPR003796">
    <property type="entry name" value="RNR_NrdR-like"/>
</dbReference>
<dbReference type="NCBIfam" id="TIGR00244">
    <property type="entry name" value="transcriptional regulator NrdR"/>
    <property type="match status" value="1"/>
</dbReference>
<dbReference type="PANTHER" id="PTHR30455">
    <property type="entry name" value="TRANSCRIPTIONAL REPRESSOR NRDR"/>
    <property type="match status" value="1"/>
</dbReference>
<dbReference type="PANTHER" id="PTHR30455:SF2">
    <property type="entry name" value="TRANSCRIPTIONAL REPRESSOR NRDR"/>
    <property type="match status" value="1"/>
</dbReference>
<dbReference type="Pfam" id="PF03477">
    <property type="entry name" value="ATP-cone"/>
    <property type="match status" value="1"/>
</dbReference>
<dbReference type="Pfam" id="PF22811">
    <property type="entry name" value="Zn_ribbon_NrdR"/>
    <property type="match status" value="1"/>
</dbReference>
<dbReference type="PROSITE" id="PS51161">
    <property type="entry name" value="ATP_CONE"/>
    <property type="match status" value="1"/>
</dbReference>
<accession>Q8PPE2</accession>
<gene>
    <name evidence="1" type="primary">nrdR</name>
    <name type="ordered locus">XAC0744</name>
</gene>